<proteinExistence type="evidence at protein level"/>
<sequence length="440" mass="45592">MPAALHRRSWVPAASEDHVLAIAADAAARDAAGVAAEVERLVADSHRIHDVDGLNLNPATNVMNPAAEALLSRGLGSRPSLGYPGDKYEMGLEAIERIEVVAAELAAEVFGARFAEVRVSSGALSNLYVFMATCQPGDTIIAPPPAIGGHVTHHAAGAAGLYGLKTVPAPVDADGYSVDVVALAKLAREVKPKLITIGGSLNLFPHPVPAIREVADSVGAKVLFDAAHLSGMVAGKAWPQPLEDGAHAITMSTYKSLGGPAGGLIVSNDAALMERIDAIAYPGLTANSDAGRTAALARGLLDWKVHGTAYAAAMRDTAQALARALDALGLPVFAKARGFTQSHQFALEAARWGGGQRAAKQLARGGLLACGIGLPIAPVDGDINGLRLGVPEIVRLGFTPEDMPQLAGWIARALAGDAPAVAAEVRERRTRLNGLRYIVR</sequence>
<organism>
    <name type="scientific">Variovorax paradoxus</name>
    <dbReference type="NCBI Taxonomy" id="34073"/>
    <lineage>
        <taxon>Bacteria</taxon>
        <taxon>Pseudomonadati</taxon>
        <taxon>Pseudomonadota</taxon>
        <taxon>Betaproteobacteria</taxon>
        <taxon>Burkholderiales</taxon>
        <taxon>Comamonadaceae</taxon>
        <taxon>Variovorax</taxon>
    </lineage>
</organism>
<accession>B2DEW1</accession>
<feature type="chain" id="PRO_0000461465" description="Alpha-methylserine aldolase">
    <location>
        <begin position="1"/>
        <end position="440"/>
    </location>
</feature>
<feature type="modified residue" description="N6-(pyridoxal phosphate)lysine" evidence="2">
    <location>
        <position position="255"/>
    </location>
</feature>
<keyword id="KW-0456">Lyase</keyword>
<keyword id="KW-0663">Pyridoxal phosphate</keyword>
<comment type="function">
    <text evidence="3">Catalyzes the reversible interconversion of alpha-methyl-L-serine to L-alanine and formaldehyde (PubMed:18838814). Can also catalyze the synthesis of alpha-ethyl-L-serine from L-2-aminobutyric acid and formaldehyde (PubMed:18838814). Also shows low alanine racemase activity (PubMed:18838814). Cannot use alpha-methyl-D-serine, L-serine, D-serine, (S)-2-amino-1-propanol, (R)-2-amino-1-propanol, (S)-alpha-hydroxymethyltyrosine, (R)-alpha-hydroxymethyltyrosine, alpha-iso-butyl-DL-serine, alpha-iso-propyl-DL-serine or alpha-benzyl-DL-serine (PubMed:18838814). Cannot use D-alanine instead of L-alanine as the substrate for alpha-methyl-L-serine synthesis (PubMed:18838814). Does not require tetrahydrofolate (THF) for activity (PubMed:18838814).</text>
</comment>
<comment type="catalytic activity">
    <reaction evidence="3">
        <text>2-methyl-L-serine = formaldehyde + L-alanine</text>
        <dbReference type="Rhea" id="RHEA:64164"/>
        <dbReference type="ChEBI" id="CHEBI:16842"/>
        <dbReference type="ChEBI" id="CHEBI:57972"/>
        <dbReference type="ChEBI" id="CHEBI:149759"/>
    </reaction>
</comment>
<comment type="catalytic activity">
    <reaction evidence="3">
        <text>2-ethyl-L-serine = (2S)-2-aminobutanoate + formaldehyde</text>
        <dbReference type="Rhea" id="RHEA:64168"/>
        <dbReference type="ChEBI" id="CHEBI:16842"/>
        <dbReference type="ChEBI" id="CHEBI:74359"/>
        <dbReference type="ChEBI" id="CHEBI:149760"/>
    </reaction>
</comment>
<comment type="cofactor">
    <cofactor evidence="3">
        <name>pyridoxal 5'-phosphate</name>
        <dbReference type="ChEBI" id="CHEBI:597326"/>
    </cofactor>
</comment>
<comment type="activity regulation">
    <text evidence="3">In the alpha-methyl-L-serine synthesis reaction, activity is inhibited by an excess amount of formaldehyde (at a concentration greater than 4 mM) (PubMed:18838814). Formaldehyde release activity is reduced by the sulfhydryl reagent N-ethylmaleimide, iodoacetate amide and iodoacetic acid, but not by dithiothreitol and 2-mercaptoethanol (PubMed:18838814). Activity is enhanced by 1 mM of manganese chloride (PubMed:18838814).</text>
</comment>
<comment type="biophysicochemical properties">
    <kinetics>
        <KM evidence="3">1.2 mM for alpha-methyl-L-serine</KM>
        <Vmax evidence="3">1.89 umol/min/mg enzyme toward alpha-methyl-L-serine</Vmax>
    </kinetics>
    <phDependence>
        <text evidence="3">Optimum pH is 7.4-8.0 with alpha-methyl-L-serine as substrate.</text>
    </phDependence>
    <temperatureDependence>
        <text evidence="3">Optimum temperature is 50 degrees Celsius with alpha-methyl-L-serine as substrate.</text>
    </temperatureDependence>
</comment>
<comment type="subunit">
    <text evidence="1">Homodimer.</text>
</comment>
<comment type="similarity">
    <text evidence="5">Belongs to the SHMT family. Alpha-methylserine aldolase subfamily.</text>
</comment>
<gene>
    <name evidence="6" type="primary">msald</name>
</gene>
<protein>
    <recommendedName>
        <fullName evidence="4">Alpha-methylserine aldolase</fullName>
        <ecNumber evidence="3">4.1.2.-</ecNumber>
    </recommendedName>
</protein>
<reference evidence="6" key="1">
    <citation type="journal article" date="2008" name="Biosci. Biotechnol. Biochem.">
        <title>Gene cloning of alpha-methylserine aldolase from Variovorax paradoxus and purification and characterization of the recombinant enzyme.</title>
        <authorList>
            <person name="Nozaki H."/>
            <person name="Kuroda S."/>
            <person name="Watanabe K."/>
            <person name="Yokozeki K."/>
        </authorList>
    </citation>
    <scope>NUCLEOTIDE SEQUENCE [GENOMIC DNA]</scope>
    <scope>FUNCTION</scope>
    <scope>CATALYTIC ACTIVITY</scope>
    <scope>COFACTOR</scope>
    <scope>ACTIVITY REGULATION</scope>
    <scope>BIOPHYSICOCHEMICAL PROPERTIES</scope>
    <source>
        <strain>NBRC 15150</strain>
    </source>
</reference>
<dbReference type="EC" id="4.1.2.-" evidence="3"/>
<dbReference type="EMBL" id="AB426475">
    <property type="protein sequence ID" value="BAG31014.1"/>
    <property type="molecule type" value="Genomic_DNA"/>
</dbReference>
<dbReference type="SMR" id="B2DEW1"/>
<dbReference type="GO" id="GO:0005737">
    <property type="term" value="C:cytoplasm"/>
    <property type="evidence" value="ECO:0007669"/>
    <property type="project" value="TreeGrafter"/>
</dbReference>
<dbReference type="GO" id="GO:0004372">
    <property type="term" value="F:glycine hydroxymethyltransferase activity"/>
    <property type="evidence" value="ECO:0007669"/>
    <property type="project" value="InterPro"/>
</dbReference>
<dbReference type="GO" id="GO:0016829">
    <property type="term" value="F:lyase activity"/>
    <property type="evidence" value="ECO:0007669"/>
    <property type="project" value="UniProtKB-KW"/>
</dbReference>
<dbReference type="GO" id="GO:0030170">
    <property type="term" value="F:pyridoxal phosphate binding"/>
    <property type="evidence" value="ECO:0007669"/>
    <property type="project" value="InterPro"/>
</dbReference>
<dbReference type="GO" id="GO:0019264">
    <property type="term" value="P:glycine biosynthetic process from serine"/>
    <property type="evidence" value="ECO:0007669"/>
    <property type="project" value="InterPro"/>
</dbReference>
<dbReference type="GO" id="GO:0035999">
    <property type="term" value="P:tetrahydrofolate interconversion"/>
    <property type="evidence" value="ECO:0007669"/>
    <property type="project" value="InterPro"/>
</dbReference>
<dbReference type="Gene3D" id="3.90.1150.10">
    <property type="entry name" value="Aspartate Aminotransferase, domain 1"/>
    <property type="match status" value="1"/>
</dbReference>
<dbReference type="Gene3D" id="3.40.640.10">
    <property type="entry name" value="Type I PLP-dependent aspartate aminotransferase-like (Major domain)"/>
    <property type="match status" value="1"/>
</dbReference>
<dbReference type="InterPro" id="IPR015424">
    <property type="entry name" value="PyrdxlP-dep_Trfase"/>
</dbReference>
<dbReference type="InterPro" id="IPR015421">
    <property type="entry name" value="PyrdxlP-dep_Trfase_major"/>
</dbReference>
<dbReference type="InterPro" id="IPR015422">
    <property type="entry name" value="PyrdxlP-dep_Trfase_small"/>
</dbReference>
<dbReference type="InterPro" id="IPR001085">
    <property type="entry name" value="Ser_HO-MeTrfase"/>
</dbReference>
<dbReference type="InterPro" id="IPR049943">
    <property type="entry name" value="Ser_HO-MeTrfase-like"/>
</dbReference>
<dbReference type="InterPro" id="IPR039429">
    <property type="entry name" value="SHMT-like_dom"/>
</dbReference>
<dbReference type="PANTHER" id="PTHR11680">
    <property type="entry name" value="SERINE HYDROXYMETHYLTRANSFERASE"/>
    <property type="match status" value="1"/>
</dbReference>
<dbReference type="PANTHER" id="PTHR11680:SF35">
    <property type="entry name" value="SERINE HYDROXYMETHYLTRANSFERASE 1"/>
    <property type="match status" value="1"/>
</dbReference>
<dbReference type="Pfam" id="PF00464">
    <property type="entry name" value="SHMT"/>
    <property type="match status" value="1"/>
</dbReference>
<dbReference type="PIRSF" id="PIRSF000412">
    <property type="entry name" value="SHMT"/>
    <property type="match status" value="1"/>
</dbReference>
<dbReference type="SUPFAM" id="SSF53383">
    <property type="entry name" value="PLP-dependent transferases"/>
    <property type="match status" value="1"/>
</dbReference>
<name>MSAL1_VARPD</name>
<evidence type="ECO:0000250" key="1">
    <source>
        <dbReference type="UniProtKB" id="B2DEV5"/>
    </source>
</evidence>
<evidence type="ECO:0000250" key="2">
    <source>
        <dbReference type="UniProtKB" id="P0A825"/>
    </source>
</evidence>
<evidence type="ECO:0000269" key="3">
    <source>
    </source>
</evidence>
<evidence type="ECO:0000303" key="4">
    <source>
    </source>
</evidence>
<evidence type="ECO:0000305" key="5"/>
<evidence type="ECO:0000312" key="6">
    <source>
        <dbReference type="EMBL" id="BAG31014.1"/>
    </source>
</evidence>